<reference key="1">
    <citation type="journal article" date="2011" name="J. Bacteriol.">
        <title>Comparative genomics of 28 Salmonella enterica isolates: evidence for CRISPR-mediated adaptive sublineage evolution.</title>
        <authorList>
            <person name="Fricke W.F."/>
            <person name="Mammel M.K."/>
            <person name="McDermott P.F."/>
            <person name="Tartera C."/>
            <person name="White D.G."/>
            <person name="Leclerc J.E."/>
            <person name="Ravel J."/>
            <person name="Cebula T.A."/>
        </authorList>
    </citation>
    <scope>NUCLEOTIDE SEQUENCE [LARGE SCALE GENOMIC DNA]</scope>
    <source>
        <strain>CT_02021853</strain>
    </source>
</reference>
<organism>
    <name type="scientific">Salmonella dublin (strain CT_02021853)</name>
    <dbReference type="NCBI Taxonomy" id="439851"/>
    <lineage>
        <taxon>Bacteria</taxon>
        <taxon>Pseudomonadati</taxon>
        <taxon>Pseudomonadota</taxon>
        <taxon>Gammaproteobacteria</taxon>
        <taxon>Enterobacterales</taxon>
        <taxon>Enterobacteriaceae</taxon>
        <taxon>Salmonella</taxon>
    </lineage>
</organism>
<keyword id="KW-0067">ATP-binding</keyword>
<keyword id="KW-0436">Ligase</keyword>
<keyword id="KW-0460">Magnesium</keyword>
<keyword id="KW-0479">Metal-binding</keyword>
<keyword id="KW-0547">Nucleotide-binding</keyword>
<keyword id="KW-0658">Purine biosynthesis</keyword>
<protein>
    <recommendedName>
        <fullName evidence="1">Formate-dependent phosphoribosylglycinamide formyltransferase</fullName>
        <ecNumber evidence="1">6.3.1.21</ecNumber>
    </recommendedName>
    <alternativeName>
        <fullName evidence="1">5'-phosphoribosylglycinamide transformylase 2</fullName>
    </alternativeName>
    <alternativeName>
        <fullName evidence="1">Formate-dependent GAR transformylase</fullName>
    </alternativeName>
    <alternativeName>
        <fullName evidence="1">GAR transformylase 2</fullName>
        <shortName evidence="1">GART 2</shortName>
    </alternativeName>
    <alternativeName>
        <fullName evidence="1">Non-folate glycinamide ribonucleotide transformylase</fullName>
    </alternativeName>
    <alternativeName>
        <fullName evidence="1">Phosphoribosylglycinamide formyltransferase 2</fullName>
    </alternativeName>
</protein>
<comment type="function">
    <text evidence="1">Involved in the de novo purine biosynthesis. Catalyzes the transfer of formate to 5-phospho-ribosyl-glycinamide (GAR), producing 5-phospho-ribosyl-N-formylglycinamide (FGAR). Formate is provided by PurU via hydrolysis of 10-formyl-tetrahydrofolate.</text>
</comment>
<comment type="catalytic activity">
    <reaction evidence="1">
        <text>N(1)-(5-phospho-beta-D-ribosyl)glycinamide + formate + ATP = N(2)-formyl-N(1)-(5-phospho-beta-D-ribosyl)glycinamide + ADP + phosphate + H(+)</text>
        <dbReference type="Rhea" id="RHEA:24829"/>
        <dbReference type="ChEBI" id="CHEBI:15378"/>
        <dbReference type="ChEBI" id="CHEBI:15740"/>
        <dbReference type="ChEBI" id="CHEBI:30616"/>
        <dbReference type="ChEBI" id="CHEBI:43474"/>
        <dbReference type="ChEBI" id="CHEBI:143788"/>
        <dbReference type="ChEBI" id="CHEBI:147286"/>
        <dbReference type="ChEBI" id="CHEBI:456216"/>
        <dbReference type="EC" id="6.3.1.21"/>
    </reaction>
    <physiologicalReaction direction="left-to-right" evidence="1">
        <dbReference type="Rhea" id="RHEA:24830"/>
    </physiologicalReaction>
</comment>
<comment type="pathway">
    <text evidence="1">Purine metabolism; IMP biosynthesis via de novo pathway; N(2)-formyl-N(1)-(5-phospho-D-ribosyl)glycinamide from N(1)-(5-phospho-D-ribosyl)glycinamide (formate route): step 1/1.</text>
</comment>
<comment type="subunit">
    <text evidence="1">Homodimer.</text>
</comment>
<comment type="similarity">
    <text evidence="1">Belongs to the PurK/PurT family.</text>
</comment>
<proteinExistence type="inferred from homology"/>
<dbReference type="EC" id="6.3.1.21" evidence="1"/>
<dbReference type="EMBL" id="CP001144">
    <property type="protein sequence ID" value="ACH75359.1"/>
    <property type="molecule type" value="Genomic_DNA"/>
</dbReference>
<dbReference type="RefSeq" id="WP_000173430.1">
    <property type="nucleotide sequence ID" value="NC_011205.1"/>
</dbReference>
<dbReference type="SMR" id="B5FSQ0"/>
<dbReference type="KEGG" id="sed:SeD_A1366"/>
<dbReference type="HOGENOM" id="CLU_011534_1_3_6"/>
<dbReference type="UniPathway" id="UPA00074">
    <property type="reaction ID" value="UER00127"/>
</dbReference>
<dbReference type="Proteomes" id="UP000008322">
    <property type="component" value="Chromosome"/>
</dbReference>
<dbReference type="GO" id="GO:0005829">
    <property type="term" value="C:cytosol"/>
    <property type="evidence" value="ECO:0007669"/>
    <property type="project" value="TreeGrafter"/>
</dbReference>
<dbReference type="GO" id="GO:0005524">
    <property type="term" value="F:ATP binding"/>
    <property type="evidence" value="ECO:0007669"/>
    <property type="project" value="UniProtKB-UniRule"/>
</dbReference>
<dbReference type="GO" id="GO:0000287">
    <property type="term" value="F:magnesium ion binding"/>
    <property type="evidence" value="ECO:0007669"/>
    <property type="project" value="InterPro"/>
</dbReference>
<dbReference type="GO" id="GO:0043815">
    <property type="term" value="F:phosphoribosylglycinamide formyltransferase 2 activity"/>
    <property type="evidence" value="ECO:0007669"/>
    <property type="project" value="UniProtKB-UniRule"/>
</dbReference>
<dbReference type="GO" id="GO:0004644">
    <property type="term" value="F:phosphoribosylglycinamide formyltransferase activity"/>
    <property type="evidence" value="ECO:0007669"/>
    <property type="project" value="InterPro"/>
</dbReference>
<dbReference type="GO" id="GO:0006189">
    <property type="term" value="P:'de novo' IMP biosynthetic process"/>
    <property type="evidence" value="ECO:0007669"/>
    <property type="project" value="UniProtKB-UniRule"/>
</dbReference>
<dbReference type="FunFam" id="3.30.1490.20:FF:000013">
    <property type="entry name" value="Formate-dependent phosphoribosylglycinamide formyltransferase"/>
    <property type="match status" value="1"/>
</dbReference>
<dbReference type="FunFam" id="3.30.470.20:FF:000027">
    <property type="entry name" value="Formate-dependent phosphoribosylglycinamide formyltransferase"/>
    <property type="match status" value="1"/>
</dbReference>
<dbReference type="FunFam" id="3.40.50.20:FF:000007">
    <property type="entry name" value="Formate-dependent phosphoribosylglycinamide formyltransferase"/>
    <property type="match status" value="1"/>
</dbReference>
<dbReference type="Gene3D" id="3.40.50.20">
    <property type="match status" value="1"/>
</dbReference>
<dbReference type="Gene3D" id="3.30.1490.20">
    <property type="entry name" value="ATP-grasp fold, A domain"/>
    <property type="match status" value="1"/>
</dbReference>
<dbReference type="Gene3D" id="3.30.470.20">
    <property type="entry name" value="ATP-grasp fold, B domain"/>
    <property type="match status" value="1"/>
</dbReference>
<dbReference type="HAMAP" id="MF_01643">
    <property type="entry name" value="PurT"/>
    <property type="match status" value="1"/>
</dbReference>
<dbReference type="InterPro" id="IPR011761">
    <property type="entry name" value="ATP-grasp"/>
</dbReference>
<dbReference type="InterPro" id="IPR003135">
    <property type="entry name" value="ATP-grasp_carboxylate-amine"/>
</dbReference>
<dbReference type="InterPro" id="IPR013815">
    <property type="entry name" value="ATP_grasp_subdomain_1"/>
</dbReference>
<dbReference type="InterPro" id="IPR016185">
    <property type="entry name" value="PreATP-grasp_dom_sf"/>
</dbReference>
<dbReference type="InterPro" id="IPR005862">
    <property type="entry name" value="PurT"/>
</dbReference>
<dbReference type="InterPro" id="IPR054350">
    <property type="entry name" value="PurT/PurK_preATP-grasp"/>
</dbReference>
<dbReference type="InterPro" id="IPR048740">
    <property type="entry name" value="PurT_C"/>
</dbReference>
<dbReference type="InterPro" id="IPR011054">
    <property type="entry name" value="Rudment_hybrid_motif"/>
</dbReference>
<dbReference type="NCBIfam" id="NF006766">
    <property type="entry name" value="PRK09288.1"/>
    <property type="match status" value="1"/>
</dbReference>
<dbReference type="NCBIfam" id="TIGR01142">
    <property type="entry name" value="purT"/>
    <property type="match status" value="1"/>
</dbReference>
<dbReference type="PANTHER" id="PTHR43055">
    <property type="entry name" value="FORMATE-DEPENDENT PHOSPHORIBOSYLGLYCINAMIDE FORMYLTRANSFERASE"/>
    <property type="match status" value="1"/>
</dbReference>
<dbReference type="PANTHER" id="PTHR43055:SF1">
    <property type="entry name" value="FORMATE-DEPENDENT PHOSPHORIBOSYLGLYCINAMIDE FORMYLTRANSFERASE"/>
    <property type="match status" value="1"/>
</dbReference>
<dbReference type="Pfam" id="PF02222">
    <property type="entry name" value="ATP-grasp"/>
    <property type="match status" value="1"/>
</dbReference>
<dbReference type="Pfam" id="PF21244">
    <property type="entry name" value="PurT_C"/>
    <property type="match status" value="1"/>
</dbReference>
<dbReference type="Pfam" id="PF22660">
    <property type="entry name" value="RS_preATP-grasp-like"/>
    <property type="match status" value="1"/>
</dbReference>
<dbReference type="SUPFAM" id="SSF56059">
    <property type="entry name" value="Glutathione synthetase ATP-binding domain-like"/>
    <property type="match status" value="1"/>
</dbReference>
<dbReference type="SUPFAM" id="SSF52440">
    <property type="entry name" value="PreATP-grasp domain"/>
    <property type="match status" value="1"/>
</dbReference>
<dbReference type="SUPFAM" id="SSF51246">
    <property type="entry name" value="Rudiment single hybrid motif"/>
    <property type="match status" value="1"/>
</dbReference>
<dbReference type="PROSITE" id="PS50975">
    <property type="entry name" value="ATP_GRASP"/>
    <property type="match status" value="1"/>
</dbReference>
<accession>B5FSQ0</accession>
<sequence length="392" mass="42151">MTLLGTALRPAATRVMLLGAGELGKEVAIECQRLGIEVIAVDRYPDAPAMHVAHRSHVINMLDGEALRHVITEEKPHYIVPEIEAIATDTLRELEGEGLNVVPCARATQLTMNREGIRRLAAEELGLPTSTYRFADSEASFHDAVAAVGFPCIVKPVMSSSGKGQSFIRSAEQLAQAWEYAQQGGRAGAGRVIVEGVVKFDFEITLLTVSAVDGVHFCAPVGHRQQDGDYRESWQPQQMSELALKRAQEIARHVVLALGGHGLFGVELFVCGDEVIFSEVSPRPHDTGMVTLISQDLSEFALHVRAFLGMPVGAIRQYGPAASAVILPQLTSQNVTFDNVHAAVGAGVQVRLFGKPEIDGTRRLGVALATGENVEEAVIRAKKAASRVTVKG</sequence>
<evidence type="ECO:0000255" key="1">
    <source>
        <dbReference type="HAMAP-Rule" id="MF_01643"/>
    </source>
</evidence>
<name>PURT_SALDC</name>
<gene>
    <name evidence="1" type="primary">purT</name>
    <name type="ordered locus">SeD_A1366</name>
</gene>
<feature type="chain" id="PRO_1000186891" description="Formate-dependent phosphoribosylglycinamide formyltransferase">
    <location>
        <begin position="1"/>
        <end position="392"/>
    </location>
</feature>
<feature type="domain" description="ATP-grasp" evidence="1">
    <location>
        <begin position="119"/>
        <end position="308"/>
    </location>
</feature>
<feature type="binding site" evidence="1">
    <location>
        <begin position="22"/>
        <end position="23"/>
    </location>
    <ligand>
        <name>N(1)-(5-phospho-beta-D-ribosyl)glycinamide</name>
        <dbReference type="ChEBI" id="CHEBI:143788"/>
    </ligand>
</feature>
<feature type="binding site" evidence="1">
    <location>
        <position position="82"/>
    </location>
    <ligand>
        <name>N(1)-(5-phospho-beta-D-ribosyl)glycinamide</name>
        <dbReference type="ChEBI" id="CHEBI:143788"/>
    </ligand>
</feature>
<feature type="binding site" evidence="1">
    <location>
        <position position="114"/>
    </location>
    <ligand>
        <name>ATP</name>
        <dbReference type="ChEBI" id="CHEBI:30616"/>
    </ligand>
</feature>
<feature type="binding site" evidence="1">
    <location>
        <position position="155"/>
    </location>
    <ligand>
        <name>ATP</name>
        <dbReference type="ChEBI" id="CHEBI:30616"/>
    </ligand>
</feature>
<feature type="binding site" evidence="1">
    <location>
        <begin position="160"/>
        <end position="165"/>
    </location>
    <ligand>
        <name>ATP</name>
        <dbReference type="ChEBI" id="CHEBI:30616"/>
    </ligand>
</feature>
<feature type="binding site" evidence="1">
    <location>
        <begin position="195"/>
        <end position="198"/>
    </location>
    <ligand>
        <name>ATP</name>
        <dbReference type="ChEBI" id="CHEBI:30616"/>
    </ligand>
</feature>
<feature type="binding site" evidence="1">
    <location>
        <position position="203"/>
    </location>
    <ligand>
        <name>ATP</name>
        <dbReference type="ChEBI" id="CHEBI:30616"/>
    </ligand>
</feature>
<feature type="binding site" evidence="1">
    <location>
        <position position="267"/>
    </location>
    <ligand>
        <name>Mg(2+)</name>
        <dbReference type="ChEBI" id="CHEBI:18420"/>
    </ligand>
</feature>
<feature type="binding site" evidence="1">
    <location>
        <position position="279"/>
    </location>
    <ligand>
        <name>Mg(2+)</name>
        <dbReference type="ChEBI" id="CHEBI:18420"/>
    </ligand>
</feature>
<feature type="binding site" evidence="1">
    <location>
        <position position="286"/>
    </location>
    <ligand>
        <name>N(1)-(5-phospho-beta-D-ribosyl)glycinamide</name>
        <dbReference type="ChEBI" id="CHEBI:143788"/>
    </ligand>
</feature>
<feature type="binding site" evidence="1">
    <location>
        <position position="355"/>
    </location>
    <ligand>
        <name>N(1)-(5-phospho-beta-D-ribosyl)glycinamide</name>
        <dbReference type="ChEBI" id="CHEBI:143788"/>
    </ligand>
</feature>
<feature type="binding site" evidence="1">
    <location>
        <begin position="362"/>
        <end position="363"/>
    </location>
    <ligand>
        <name>N(1)-(5-phospho-beta-D-ribosyl)glycinamide</name>
        <dbReference type="ChEBI" id="CHEBI:143788"/>
    </ligand>
</feature>